<accession>B7PXE3</accession>
<name>SPAST_IXOSC</name>
<sequence>MASTVALLRDSSDDRENFDDGETDCVQVGRKRKLTVFFYPLLLVFWLLRWVFYQFFLVLCFVCRGFVPRRHLATAETTTTMATAEEPDANLLIRQKQHHKKAFDFISKALKYDEENEDFKEMSIDLYRKGIEELQKGIAIDFSKGQGTTWERAHRLSDKMKVNLEMARDRLDFLESMVKIEHLGDHLPWHGGVAPAQRGQRRRAWQKAAPSAPSEPGTGPSWLKMAENGPAKGGPCPTSPRLQRSNTGVTLRRQQQQQLGGVSTVSRSQTLPRNSVPCPRMSARSPSRKAGNNEAVPTPNTARRRASQPQVPPVHPRGRQPTTRGGAAHRGGPPTVSQRSLLSSRVPPLKGVDSRLAHLILDEVVDGAPPVLFSDIAGQEVAKQALSEMVILPTDRPELFTGLRAPPKGLLLFGPPGNGKTMLAKAVAHESNSTFLNISAASLTSKYVGEGEKLVRALFAVARELQPSIIFIDEVDSLLSERKDNEHEATRRLKTEFLVEFDGLHTGSEERVLVMGATNRPQELDDAALRRFTKRVYVTLPDHNTRVILLEKLLKKHNNPLSADKLKYLARLTEGYSGSDLTALAKDAALGPIRELNPEQVRCVDPKKMRNISLQDFLDSLKKVRRSVTPQSLDFFDRWNREFGDITV</sequence>
<protein>
    <recommendedName>
        <fullName evidence="2">Spastin</fullName>
        <ecNumber evidence="2">5.6.1.1</ecNumber>
    </recommendedName>
</protein>
<comment type="function">
    <text evidence="2">ATP-dependent microtubule severing protein. Microtubule severing may promote reorganization of cellular microtubule arrays and the release of microtubules from the microtubule organizing center following nucleation.</text>
</comment>
<comment type="catalytic activity">
    <reaction evidence="2">
        <text>n ATP + n H2O + a microtubule = n ADP + n phosphate + (n+1) alpha/beta tubulin heterodimers.</text>
        <dbReference type="EC" id="5.6.1.1"/>
    </reaction>
</comment>
<comment type="subunit">
    <text evidence="2">Homohexamer. The homohexamer is stabilized by ATP-binding. The homohexamer may adopt a ring conformation through which microtubules pass prior to being severed. Interacts with microtubules.</text>
</comment>
<comment type="subcellular location">
    <subcellularLocation>
        <location evidence="2">Membrane</location>
        <topology evidence="2">Peripheral membrane protein</topology>
    </subcellularLocation>
    <subcellularLocation>
        <location evidence="2">Cytoplasm</location>
        <location evidence="2">Cytoskeleton</location>
        <location evidence="2">Microtubule organizing center</location>
        <location evidence="2">Centrosome</location>
    </subcellularLocation>
    <subcellularLocation>
        <location evidence="2">Cytoplasm</location>
        <location evidence="2">Cytoskeleton</location>
    </subcellularLocation>
    <text evidence="2">Forms an intramembrane hairpin-like structure in the membrane.</text>
</comment>
<comment type="similarity">
    <text evidence="2">Belongs to the AAA ATPase family. Spastin subfamily.</text>
</comment>
<reference key="1">
    <citation type="submission" date="2008-03" db="EMBL/GenBank/DDBJ databases">
        <title>Annotation of Ixodes scapularis.</title>
        <authorList>
            <consortium name="Ixodes scapularis Genome Project Consortium"/>
            <person name="Caler E."/>
            <person name="Hannick L.I."/>
            <person name="Bidwell S."/>
            <person name="Joardar V."/>
            <person name="Thiagarajan M."/>
            <person name="Amedeo P."/>
            <person name="Galinsky K.J."/>
            <person name="Schobel S."/>
            <person name="Inman J."/>
            <person name="Hostetler J."/>
            <person name="Miller J."/>
            <person name="Hammond M."/>
            <person name="Megy K."/>
            <person name="Lawson D."/>
            <person name="Kodira C."/>
            <person name="Sutton G."/>
            <person name="Meyer J."/>
            <person name="Hill C.A."/>
            <person name="Birren B."/>
            <person name="Nene V."/>
            <person name="Collins F."/>
            <person name="Alarcon-Chaidez F."/>
            <person name="Wikel S."/>
            <person name="Strausberg R."/>
        </authorList>
    </citation>
    <scope>NUCLEOTIDE SEQUENCE [LARGE SCALE GENOMIC DNA]</scope>
    <source>
        <strain>Wikel</strain>
    </source>
</reference>
<keyword id="KW-0067">ATP-binding</keyword>
<keyword id="KW-0963">Cytoplasm</keyword>
<keyword id="KW-0206">Cytoskeleton</keyword>
<keyword id="KW-0413">Isomerase</keyword>
<keyword id="KW-0472">Membrane</keyword>
<keyword id="KW-0493">Microtubule</keyword>
<keyword id="KW-0547">Nucleotide-binding</keyword>
<keyword id="KW-1185">Reference proteome</keyword>
<evidence type="ECO:0000255" key="1"/>
<evidence type="ECO:0000255" key="2">
    <source>
        <dbReference type="HAMAP-Rule" id="MF_03021"/>
    </source>
</evidence>
<evidence type="ECO:0000256" key="3">
    <source>
        <dbReference type="SAM" id="MobiDB-lite"/>
    </source>
</evidence>
<organism>
    <name type="scientific">Ixodes scapularis</name>
    <name type="common">Black-legged tick</name>
    <name type="synonym">Deer tick</name>
    <dbReference type="NCBI Taxonomy" id="6945"/>
    <lineage>
        <taxon>Eukaryota</taxon>
        <taxon>Metazoa</taxon>
        <taxon>Ecdysozoa</taxon>
        <taxon>Arthropoda</taxon>
        <taxon>Chelicerata</taxon>
        <taxon>Arachnida</taxon>
        <taxon>Acari</taxon>
        <taxon>Parasitiformes</taxon>
        <taxon>Ixodida</taxon>
        <taxon>Ixodoidea</taxon>
        <taxon>Ixodidae</taxon>
        <taxon>Ixodinae</taxon>
        <taxon>Ixodes</taxon>
    </lineage>
</organism>
<gene>
    <name type="primary">spas</name>
    <name type="ORF">ISCW020482</name>
</gene>
<dbReference type="EC" id="5.6.1.1" evidence="2"/>
<dbReference type="EMBL" id="DS813618">
    <property type="protein sequence ID" value="EEC11265.1"/>
    <property type="molecule type" value="Genomic_DNA"/>
</dbReference>
<dbReference type="RefSeq" id="XP_002400359.1">
    <property type="nucleotide sequence ID" value="XM_002400315.1"/>
</dbReference>
<dbReference type="SMR" id="B7PXE3"/>
<dbReference type="FunCoup" id="B7PXE3">
    <property type="interactions" value="1193"/>
</dbReference>
<dbReference type="STRING" id="6945.B7PXE3"/>
<dbReference type="PaxDb" id="6945-B7PXE3"/>
<dbReference type="EnsemblMetazoa" id="ISCW020482-RA">
    <property type="protein sequence ID" value="ISCW020482-PA"/>
    <property type="gene ID" value="ISCW020482"/>
</dbReference>
<dbReference type="VEuPathDB" id="VectorBase:ISCI020482"/>
<dbReference type="VEuPathDB" id="VectorBase:ISCP_000124"/>
<dbReference type="VEuPathDB" id="VectorBase:ISCW020482"/>
<dbReference type="HOGENOM" id="CLU_000688_21_5_1"/>
<dbReference type="InParanoid" id="B7PXE3"/>
<dbReference type="OrthoDB" id="10251136at2759"/>
<dbReference type="PhylomeDB" id="B7PXE3"/>
<dbReference type="Proteomes" id="UP000001555">
    <property type="component" value="Unassembled WGS sequence"/>
</dbReference>
<dbReference type="GO" id="GO:0005813">
    <property type="term" value="C:centrosome"/>
    <property type="evidence" value="ECO:0007669"/>
    <property type="project" value="UniProtKB-SubCell"/>
</dbReference>
<dbReference type="GO" id="GO:0005737">
    <property type="term" value="C:cytoplasm"/>
    <property type="evidence" value="ECO:0007669"/>
    <property type="project" value="UniProtKB-UniRule"/>
</dbReference>
<dbReference type="GO" id="GO:0016020">
    <property type="term" value="C:membrane"/>
    <property type="evidence" value="ECO:0007669"/>
    <property type="project" value="UniProtKB-SubCell"/>
</dbReference>
<dbReference type="GO" id="GO:0005874">
    <property type="term" value="C:microtubule"/>
    <property type="evidence" value="ECO:0007669"/>
    <property type="project" value="UniProtKB-UniRule"/>
</dbReference>
<dbReference type="GO" id="GO:0015630">
    <property type="term" value="C:microtubule cytoskeleton"/>
    <property type="evidence" value="ECO:0000318"/>
    <property type="project" value="GO_Central"/>
</dbReference>
<dbReference type="GO" id="GO:0005819">
    <property type="term" value="C:spindle"/>
    <property type="evidence" value="ECO:0007669"/>
    <property type="project" value="UniProtKB-UniRule"/>
</dbReference>
<dbReference type="GO" id="GO:0005524">
    <property type="term" value="F:ATP binding"/>
    <property type="evidence" value="ECO:0007669"/>
    <property type="project" value="UniProtKB-UniRule"/>
</dbReference>
<dbReference type="GO" id="GO:0016887">
    <property type="term" value="F:ATP hydrolysis activity"/>
    <property type="evidence" value="ECO:0000318"/>
    <property type="project" value="GO_Central"/>
</dbReference>
<dbReference type="GO" id="GO:0008017">
    <property type="term" value="F:microtubule binding"/>
    <property type="evidence" value="ECO:0000250"/>
    <property type="project" value="UniProtKB"/>
</dbReference>
<dbReference type="GO" id="GO:0008568">
    <property type="term" value="F:microtubule severing ATPase activity"/>
    <property type="evidence" value="ECO:0000250"/>
    <property type="project" value="UniProtKB"/>
</dbReference>
<dbReference type="GO" id="GO:0051013">
    <property type="term" value="P:microtubule severing"/>
    <property type="evidence" value="ECO:0000250"/>
    <property type="project" value="UniProtKB"/>
</dbReference>
<dbReference type="GO" id="GO:0031117">
    <property type="term" value="P:positive regulation of microtubule depolymerization"/>
    <property type="evidence" value="ECO:0007669"/>
    <property type="project" value="UniProtKB-UniRule"/>
</dbReference>
<dbReference type="GO" id="GO:0034214">
    <property type="term" value="P:protein hexamerization"/>
    <property type="evidence" value="ECO:0007669"/>
    <property type="project" value="UniProtKB-UniRule"/>
</dbReference>
<dbReference type="CDD" id="cd19524">
    <property type="entry name" value="RecA-like_spastin"/>
    <property type="match status" value="1"/>
</dbReference>
<dbReference type="FunFam" id="3.40.50.300:FF:000093">
    <property type="entry name" value="Fidgetin-like 1"/>
    <property type="match status" value="1"/>
</dbReference>
<dbReference type="FunFam" id="1.10.8.60:FF:000036">
    <property type="entry name" value="Spastin"/>
    <property type="match status" value="1"/>
</dbReference>
<dbReference type="FunFam" id="1.20.58.80:FF:000006">
    <property type="entry name" value="Spastin"/>
    <property type="match status" value="1"/>
</dbReference>
<dbReference type="Gene3D" id="1.10.8.60">
    <property type="match status" value="1"/>
</dbReference>
<dbReference type="Gene3D" id="3.40.50.300">
    <property type="entry name" value="P-loop containing nucleotide triphosphate hydrolases"/>
    <property type="match status" value="1"/>
</dbReference>
<dbReference type="Gene3D" id="1.20.58.80">
    <property type="entry name" value="Phosphotransferase system, lactose/cellobiose-type IIA subunit"/>
    <property type="match status" value="1"/>
</dbReference>
<dbReference type="HAMAP" id="MF_03021">
    <property type="entry name" value="Spastin"/>
    <property type="match status" value="1"/>
</dbReference>
<dbReference type="InterPro" id="IPR003593">
    <property type="entry name" value="AAA+_ATPase"/>
</dbReference>
<dbReference type="InterPro" id="IPR041569">
    <property type="entry name" value="AAA_lid_3"/>
</dbReference>
<dbReference type="InterPro" id="IPR003959">
    <property type="entry name" value="ATPase_AAA_core"/>
</dbReference>
<dbReference type="InterPro" id="IPR003960">
    <property type="entry name" value="ATPase_AAA_CS"/>
</dbReference>
<dbReference type="InterPro" id="IPR007330">
    <property type="entry name" value="MIT_dom"/>
</dbReference>
<dbReference type="InterPro" id="IPR050304">
    <property type="entry name" value="MT-severing_AAA_ATPase"/>
</dbReference>
<dbReference type="InterPro" id="IPR027417">
    <property type="entry name" value="P-loop_NTPase"/>
</dbReference>
<dbReference type="InterPro" id="IPR015415">
    <property type="entry name" value="Spast_Vps4_C"/>
</dbReference>
<dbReference type="InterPro" id="IPR017179">
    <property type="entry name" value="Spastin"/>
</dbReference>
<dbReference type="PANTHER" id="PTHR23074">
    <property type="entry name" value="AAA DOMAIN-CONTAINING"/>
    <property type="match status" value="1"/>
</dbReference>
<dbReference type="PANTHER" id="PTHR23074:SF86">
    <property type="entry name" value="SPASTIN"/>
    <property type="match status" value="1"/>
</dbReference>
<dbReference type="Pfam" id="PF00004">
    <property type="entry name" value="AAA"/>
    <property type="match status" value="1"/>
</dbReference>
<dbReference type="Pfam" id="PF17862">
    <property type="entry name" value="AAA_lid_3"/>
    <property type="match status" value="1"/>
</dbReference>
<dbReference type="Pfam" id="PF09336">
    <property type="entry name" value="Vps4_C"/>
    <property type="match status" value="1"/>
</dbReference>
<dbReference type="SMART" id="SM00382">
    <property type="entry name" value="AAA"/>
    <property type="match status" value="1"/>
</dbReference>
<dbReference type="SMART" id="SM00745">
    <property type="entry name" value="MIT"/>
    <property type="match status" value="1"/>
</dbReference>
<dbReference type="SUPFAM" id="SSF52540">
    <property type="entry name" value="P-loop containing nucleoside triphosphate hydrolases"/>
    <property type="match status" value="1"/>
</dbReference>
<dbReference type="PROSITE" id="PS00674">
    <property type="entry name" value="AAA"/>
    <property type="match status" value="1"/>
</dbReference>
<proteinExistence type="inferred from homology"/>
<feature type="chain" id="PRO_0000367153" description="Spastin">
    <location>
        <begin position="1"/>
        <end position="648"/>
    </location>
</feature>
<feature type="topological domain" description="Cytoplasmic" evidence="2">
    <location>
        <begin position="1"/>
        <end position="40"/>
    </location>
</feature>
<feature type="intramembrane region" description="Helical" evidence="2">
    <location>
        <begin position="41"/>
        <end position="61"/>
    </location>
</feature>
<feature type="topological domain" description="Cytoplasmic" evidence="2">
    <location>
        <begin position="62"/>
        <end position="648"/>
    </location>
</feature>
<feature type="domain" description="MIT" evidence="1">
    <location>
        <begin position="99"/>
        <end position="174"/>
    </location>
</feature>
<feature type="region of interest" description="Disordered" evidence="3">
    <location>
        <begin position="188"/>
        <end position="346"/>
    </location>
</feature>
<feature type="compositionally biased region" description="Low complexity" evidence="3">
    <location>
        <begin position="247"/>
        <end position="266"/>
    </location>
</feature>
<feature type="binding site" evidence="2">
    <location>
        <begin position="414"/>
        <end position="421"/>
    </location>
    <ligand>
        <name>ATP</name>
        <dbReference type="ChEBI" id="CHEBI:30616"/>
    </ligand>
</feature>